<comment type="function">
    <text evidence="2">Plays an important role in the regulation of glutamine catabolism. Promotes mitochondrial respiration and increases ATP generation in cells by catalyzing the synthesis of glutamate and alpha-ketoglutarate. Increases cellular anti-oxidant function via NADH and glutathione production. May play a role in preventing tumor proliferation.</text>
</comment>
<comment type="catalytic activity">
    <reaction evidence="5">
        <text>L-glutamine + H2O = L-glutamate + NH4(+)</text>
        <dbReference type="Rhea" id="RHEA:15889"/>
        <dbReference type="ChEBI" id="CHEBI:15377"/>
        <dbReference type="ChEBI" id="CHEBI:28938"/>
        <dbReference type="ChEBI" id="CHEBI:29985"/>
        <dbReference type="ChEBI" id="CHEBI:58359"/>
        <dbReference type="EC" id="3.5.1.2"/>
    </reaction>
</comment>
<comment type="activity regulation">
    <text evidence="5">Enzyme activity is not stimulated by phosphate. Phosphate increases kcat, but decreases substrate affinity, resulting in unchanged enzyme activity.</text>
</comment>
<comment type="subunit">
    <text evidence="2 6">Homotetramer, dimer of dimers (By similarity). Does not assemble into higher oligomers (PubMed:23935106). Interacts with the PDZ domain of the syntrophin SNTA1. Interacts with the PDZ domain of TAX1BP3 (By similarity).</text>
</comment>
<comment type="subcellular location">
    <subcellularLocation>
        <location evidence="2">Mitochondrion</location>
    </subcellularLocation>
</comment>
<comment type="similarity">
    <text evidence="8">Belongs to the glutaminase family.</text>
</comment>
<comment type="sequence caution" evidence="8">
    <conflict type="erroneous initiation">
        <sequence resource="EMBL-CDS" id="BAD90156"/>
    </conflict>
    <text>Extended N-terminus.</text>
</comment>
<proteinExistence type="evidence at protein level"/>
<feature type="transit peptide" description="Mitochondrion" evidence="3">
    <location>
        <begin position="1"/>
        <end position="14"/>
    </location>
</feature>
<feature type="chain" id="PRO_0000011626" description="Glutaminase liver isoform, mitochondrial">
    <location>
        <begin position="15"/>
        <end position="602"/>
    </location>
</feature>
<feature type="repeat" description="ANK 1">
    <location>
        <begin position="518"/>
        <end position="551"/>
    </location>
</feature>
<feature type="repeat" description="ANK 2">
    <location>
        <begin position="552"/>
        <end position="585"/>
    </location>
</feature>
<feature type="region of interest" description="Disordered" evidence="4">
    <location>
        <begin position="1"/>
        <end position="29"/>
    </location>
</feature>
<feature type="region of interest" description="Disordered" evidence="4">
    <location>
        <begin position="45"/>
        <end position="66"/>
    </location>
</feature>
<feature type="binding site" evidence="1">
    <location>
        <position position="219"/>
    </location>
    <ligand>
        <name>substrate</name>
    </ligand>
</feature>
<feature type="binding site" evidence="1">
    <location>
        <position position="268"/>
    </location>
    <ligand>
        <name>substrate</name>
    </ligand>
</feature>
<feature type="binding site" evidence="1">
    <location>
        <position position="314"/>
    </location>
    <ligand>
        <name>substrate</name>
    </ligand>
</feature>
<feature type="binding site" evidence="1">
    <location>
        <position position="321"/>
    </location>
    <ligand>
        <name>substrate</name>
    </ligand>
</feature>
<feature type="binding site" evidence="1">
    <location>
        <position position="347"/>
    </location>
    <ligand>
        <name>substrate</name>
    </ligand>
</feature>
<feature type="binding site" evidence="1">
    <location>
        <position position="399"/>
    </location>
    <ligand>
        <name>substrate</name>
    </ligand>
</feature>
<feature type="binding site" evidence="1">
    <location>
        <position position="417"/>
    </location>
    <ligand>
        <name>substrate</name>
    </ligand>
</feature>
<feature type="modified residue" description="N6-succinyllysine" evidence="10">
    <location>
        <position position="253"/>
    </location>
</feature>
<feature type="modified residue" description="N6-acetyllysine" evidence="9">
    <location>
        <position position="279"/>
    </location>
</feature>
<feature type="modified residue" description="N6-acetyllysine" evidence="9">
    <location>
        <position position="284"/>
    </location>
</feature>
<feature type="modified residue" description="N6-acetyllysine" evidence="9">
    <location>
        <position position="329"/>
    </location>
</feature>
<feature type="sequence conflict" description="In Ref. 2; BAE38445." evidence="8" ref="2">
    <original>Q</original>
    <variation>K</variation>
    <location>
        <position position="312"/>
    </location>
</feature>
<feature type="sequence conflict" description="In Ref. 3; AAI41116." evidence="8" ref="3">
    <original>T</original>
    <variation>S</variation>
    <location>
        <position position="584"/>
    </location>
</feature>
<evidence type="ECO:0000250" key="1">
    <source>
        <dbReference type="UniProtKB" id="O94925"/>
    </source>
</evidence>
<evidence type="ECO:0000250" key="2">
    <source>
        <dbReference type="UniProtKB" id="Q9UI32"/>
    </source>
</evidence>
<evidence type="ECO:0000255" key="3"/>
<evidence type="ECO:0000256" key="4">
    <source>
        <dbReference type="SAM" id="MobiDB-lite"/>
    </source>
</evidence>
<evidence type="ECO:0000269" key="5">
    <source>
    </source>
</evidence>
<evidence type="ECO:0000269" key="6">
    <source>
    </source>
</evidence>
<evidence type="ECO:0000303" key="7">
    <source>
    </source>
</evidence>
<evidence type="ECO:0000305" key="8"/>
<evidence type="ECO:0007744" key="9">
    <source>
    </source>
</evidence>
<evidence type="ECO:0007744" key="10">
    <source>
    </source>
</evidence>
<accession>Q571F8</accession>
<accession>B2RUF2</accession>
<accession>Q3TMJ6</accession>
<organism>
    <name type="scientific">Mus musculus</name>
    <name type="common">Mouse</name>
    <dbReference type="NCBI Taxonomy" id="10090"/>
    <lineage>
        <taxon>Eukaryota</taxon>
        <taxon>Metazoa</taxon>
        <taxon>Chordata</taxon>
        <taxon>Craniata</taxon>
        <taxon>Vertebrata</taxon>
        <taxon>Euteleostomi</taxon>
        <taxon>Mammalia</taxon>
        <taxon>Eutheria</taxon>
        <taxon>Euarchontoglires</taxon>
        <taxon>Glires</taxon>
        <taxon>Rodentia</taxon>
        <taxon>Myomorpha</taxon>
        <taxon>Muroidea</taxon>
        <taxon>Muridae</taxon>
        <taxon>Murinae</taxon>
        <taxon>Mus</taxon>
        <taxon>Mus</taxon>
    </lineage>
</organism>
<name>GLSL_MOUSE</name>
<reference key="1">
    <citation type="submission" date="2005-02" db="EMBL/GenBank/DDBJ databases">
        <title>Prediction of the coding sequences of mouse homologues of KIAA gene. The complete nucleotide sequences of mouse KIAA-homologous cDNAs identified by screening of terminal sequences of cDNA clones randomly sampled from size-fractionated libraries.</title>
        <authorList>
            <person name="Okazaki N."/>
            <person name="Kikuno R.F."/>
            <person name="Ohara R."/>
            <person name="Inamoto S."/>
            <person name="Nagase T."/>
            <person name="Ohara O."/>
            <person name="Koga H."/>
        </authorList>
    </citation>
    <scope>NUCLEOTIDE SEQUENCE [LARGE SCALE MRNA]</scope>
    <source>
        <tissue>Spleen</tissue>
    </source>
</reference>
<reference key="2">
    <citation type="journal article" date="2005" name="Science">
        <title>The transcriptional landscape of the mammalian genome.</title>
        <authorList>
            <person name="Carninci P."/>
            <person name="Kasukawa T."/>
            <person name="Katayama S."/>
            <person name="Gough J."/>
            <person name="Frith M.C."/>
            <person name="Maeda N."/>
            <person name="Oyama R."/>
            <person name="Ravasi T."/>
            <person name="Lenhard B."/>
            <person name="Wells C."/>
            <person name="Kodzius R."/>
            <person name="Shimokawa K."/>
            <person name="Bajic V.B."/>
            <person name="Brenner S.E."/>
            <person name="Batalov S."/>
            <person name="Forrest A.R."/>
            <person name="Zavolan M."/>
            <person name="Davis M.J."/>
            <person name="Wilming L.G."/>
            <person name="Aidinis V."/>
            <person name="Allen J.E."/>
            <person name="Ambesi-Impiombato A."/>
            <person name="Apweiler R."/>
            <person name="Aturaliya R.N."/>
            <person name="Bailey T.L."/>
            <person name="Bansal M."/>
            <person name="Baxter L."/>
            <person name="Beisel K.W."/>
            <person name="Bersano T."/>
            <person name="Bono H."/>
            <person name="Chalk A.M."/>
            <person name="Chiu K.P."/>
            <person name="Choudhary V."/>
            <person name="Christoffels A."/>
            <person name="Clutterbuck D.R."/>
            <person name="Crowe M.L."/>
            <person name="Dalla E."/>
            <person name="Dalrymple B.P."/>
            <person name="de Bono B."/>
            <person name="Della Gatta G."/>
            <person name="di Bernardo D."/>
            <person name="Down T."/>
            <person name="Engstrom P."/>
            <person name="Fagiolini M."/>
            <person name="Faulkner G."/>
            <person name="Fletcher C.F."/>
            <person name="Fukushima T."/>
            <person name="Furuno M."/>
            <person name="Futaki S."/>
            <person name="Gariboldi M."/>
            <person name="Georgii-Hemming P."/>
            <person name="Gingeras T.R."/>
            <person name="Gojobori T."/>
            <person name="Green R.E."/>
            <person name="Gustincich S."/>
            <person name="Harbers M."/>
            <person name="Hayashi Y."/>
            <person name="Hensch T.K."/>
            <person name="Hirokawa N."/>
            <person name="Hill D."/>
            <person name="Huminiecki L."/>
            <person name="Iacono M."/>
            <person name="Ikeo K."/>
            <person name="Iwama A."/>
            <person name="Ishikawa T."/>
            <person name="Jakt M."/>
            <person name="Kanapin A."/>
            <person name="Katoh M."/>
            <person name="Kawasawa Y."/>
            <person name="Kelso J."/>
            <person name="Kitamura H."/>
            <person name="Kitano H."/>
            <person name="Kollias G."/>
            <person name="Krishnan S.P."/>
            <person name="Kruger A."/>
            <person name="Kummerfeld S.K."/>
            <person name="Kurochkin I.V."/>
            <person name="Lareau L.F."/>
            <person name="Lazarevic D."/>
            <person name="Lipovich L."/>
            <person name="Liu J."/>
            <person name="Liuni S."/>
            <person name="McWilliam S."/>
            <person name="Madan Babu M."/>
            <person name="Madera M."/>
            <person name="Marchionni L."/>
            <person name="Matsuda H."/>
            <person name="Matsuzawa S."/>
            <person name="Miki H."/>
            <person name="Mignone F."/>
            <person name="Miyake S."/>
            <person name="Morris K."/>
            <person name="Mottagui-Tabar S."/>
            <person name="Mulder N."/>
            <person name="Nakano N."/>
            <person name="Nakauchi H."/>
            <person name="Ng P."/>
            <person name="Nilsson R."/>
            <person name="Nishiguchi S."/>
            <person name="Nishikawa S."/>
            <person name="Nori F."/>
            <person name="Ohara O."/>
            <person name="Okazaki Y."/>
            <person name="Orlando V."/>
            <person name="Pang K.C."/>
            <person name="Pavan W.J."/>
            <person name="Pavesi G."/>
            <person name="Pesole G."/>
            <person name="Petrovsky N."/>
            <person name="Piazza S."/>
            <person name="Reed J."/>
            <person name="Reid J.F."/>
            <person name="Ring B.Z."/>
            <person name="Ringwald M."/>
            <person name="Rost B."/>
            <person name="Ruan Y."/>
            <person name="Salzberg S.L."/>
            <person name="Sandelin A."/>
            <person name="Schneider C."/>
            <person name="Schoenbach C."/>
            <person name="Sekiguchi K."/>
            <person name="Semple C.A."/>
            <person name="Seno S."/>
            <person name="Sessa L."/>
            <person name="Sheng Y."/>
            <person name="Shibata Y."/>
            <person name="Shimada H."/>
            <person name="Shimada K."/>
            <person name="Silva D."/>
            <person name="Sinclair B."/>
            <person name="Sperling S."/>
            <person name="Stupka E."/>
            <person name="Sugiura K."/>
            <person name="Sultana R."/>
            <person name="Takenaka Y."/>
            <person name="Taki K."/>
            <person name="Tammoja K."/>
            <person name="Tan S.L."/>
            <person name="Tang S."/>
            <person name="Taylor M.S."/>
            <person name="Tegner J."/>
            <person name="Teichmann S.A."/>
            <person name="Ueda H.R."/>
            <person name="van Nimwegen E."/>
            <person name="Verardo R."/>
            <person name="Wei C.L."/>
            <person name="Yagi K."/>
            <person name="Yamanishi H."/>
            <person name="Zabarovsky E."/>
            <person name="Zhu S."/>
            <person name="Zimmer A."/>
            <person name="Hide W."/>
            <person name="Bult C."/>
            <person name="Grimmond S.M."/>
            <person name="Teasdale R.D."/>
            <person name="Liu E.T."/>
            <person name="Brusic V."/>
            <person name="Quackenbush J."/>
            <person name="Wahlestedt C."/>
            <person name="Mattick J.S."/>
            <person name="Hume D.A."/>
            <person name="Kai C."/>
            <person name="Sasaki D."/>
            <person name="Tomaru Y."/>
            <person name="Fukuda S."/>
            <person name="Kanamori-Katayama M."/>
            <person name="Suzuki M."/>
            <person name="Aoki J."/>
            <person name="Arakawa T."/>
            <person name="Iida J."/>
            <person name="Imamura K."/>
            <person name="Itoh M."/>
            <person name="Kato T."/>
            <person name="Kawaji H."/>
            <person name="Kawagashira N."/>
            <person name="Kawashima T."/>
            <person name="Kojima M."/>
            <person name="Kondo S."/>
            <person name="Konno H."/>
            <person name="Nakano K."/>
            <person name="Ninomiya N."/>
            <person name="Nishio T."/>
            <person name="Okada M."/>
            <person name="Plessy C."/>
            <person name="Shibata K."/>
            <person name="Shiraki T."/>
            <person name="Suzuki S."/>
            <person name="Tagami M."/>
            <person name="Waki K."/>
            <person name="Watahiki A."/>
            <person name="Okamura-Oho Y."/>
            <person name="Suzuki H."/>
            <person name="Kawai J."/>
            <person name="Hayashizaki Y."/>
        </authorList>
    </citation>
    <scope>NUCLEOTIDE SEQUENCE [LARGE SCALE MRNA]</scope>
    <source>
        <tissue>Lung</tissue>
    </source>
</reference>
<reference key="3">
    <citation type="journal article" date="2004" name="Genome Res.">
        <title>The status, quality, and expansion of the NIH full-length cDNA project: the Mammalian Gene Collection (MGC).</title>
        <authorList>
            <consortium name="The MGC Project Team"/>
        </authorList>
    </citation>
    <scope>NUCLEOTIDE SEQUENCE [LARGE SCALE MRNA]</scope>
    <source>
        <tissue>Lung</tissue>
    </source>
</reference>
<reference key="4">
    <citation type="journal article" date="2010" name="Cell">
        <title>A tissue-specific atlas of mouse protein phosphorylation and expression.</title>
        <authorList>
            <person name="Huttlin E.L."/>
            <person name="Jedrychowski M.P."/>
            <person name="Elias J.E."/>
            <person name="Goswami T."/>
            <person name="Rad R."/>
            <person name="Beausoleil S.A."/>
            <person name="Villen J."/>
            <person name="Haas W."/>
            <person name="Sowa M.E."/>
            <person name="Gygi S.P."/>
        </authorList>
    </citation>
    <scope>IDENTIFICATION BY MASS SPECTROMETRY [LARGE SCALE ANALYSIS]</scope>
    <source>
        <tissue>Liver</tissue>
    </source>
</reference>
<reference key="5">
    <citation type="journal article" date="2013" name="Mol. Cell">
        <title>SIRT5-mediated lysine desuccinylation impacts diverse metabolic pathways.</title>
        <authorList>
            <person name="Park J."/>
            <person name="Chen Y."/>
            <person name="Tishkoff D.X."/>
            <person name="Peng C."/>
            <person name="Tan M."/>
            <person name="Dai L."/>
            <person name="Xie Z."/>
            <person name="Zhang Y."/>
            <person name="Zwaans B.M."/>
            <person name="Skinner M.E."/>
            <person name="Lombard D.B."/>
            <person name="Zhao Y."/>
        </authorList>
    </citation>
    <scope>SUCCINYLATION [LARGE SCALE ANALYSIS] AT LYS-253</scope>
    <scope>IDENTIFICATION BY MASS SPECTROMETRY [LARGE SCALE ANALYSIS]</scope>
    <source>
        <tissue>Liver</tissue>
    </source>
</reference>
<reference key="6">
    <citation type="journal article" date="2013" name="Proc. Natl. Acad. Sci. U.S.A.">
        <title>Label-free quantitative proteomics of the lysine acetylome in mitochondria identifies substrates of SIRT3 in metabolic pathways.</title>
        <authorList>
            <person name="Rardin M.J."/>
            <person name="Newman J.C."/>
            <person name="Held J.M."/>
            <person name="Cusack M.P."/>
            <person name="Sorensen D.J."/>
            <person name="Li B."/>
            <person name="Schilling B."/>
            <person name="Mooney S.D."/>
            <person name="Kahn C.R."/>
            <person name="Verdin E."/>
            <person name="Gibson B.W."/>
        </authorList>
    </citation>
    <scope>ACETYLATION [LARGE SCALE ANALYSIS] AT LYS-279; LYS-284 AND LYS-329</scope>
    <scope>IDENTIFICATION BY MASS SPECTROMETRY [LARGE SCALE ANALYSIS]</scope>
    <source>
        <tissue>Liver</tissue>
    </source>
</reference>
<reference key="7">
    <citation type="journal article" date="2012" name="Proc. Natl. Acad. Sci. U.S.A.">
        <title>Mitochondrial localization and structure-based phosphate activation mechanism of glutaminase C with implications for cancer metabolism.</title>
        <authorList>
            <person name="Cassago A."/>
            <person name="Ferreira A.P."/>
            <person name="Ferreira I.M."/>
            <person name="Fornezari C."/>
            <person name="Gomes E.R."/>
            <person name="Greene K.S."/>
            <person name="Pereira H.M."/>
            <person name="Garratt R.C."/>
            <person name="Dias S.M."/>
            <person name="Ambrosio A.L."/>
        </authorList>
    </citation>
    <scope>CATALYTIC ACTIVITY</scope>
    <scope>ACTIVITY REGULATION</scope>
</reference>
<reference key="8">
    <citation type="journal article" date="2013" name="J. Biol. Chem.">
        <title>Active glutaminase C self-assembles into a supratetrameric oligomer that can be disrupted by an allosteric inhibitor.</title>
        <authorList>
            <person name="Ferreira A.P."/>
            <person name="Cassago A."/>
            <person name="Goncalves Kde A."/>
            <person name="Dias M.M."/>
            <person name="Adamoski D."/>
            <person name="Ascencao C.F."/>
            <person name="Honorato R.V."/>
            <person name="de Oliveira J.F."/>
            <person name="Ferreira I.M."/>
            <person name="Fornezari C."/>
            <person name="Bettini J."/>
            <person name="Oliveira P.S."/>
            <person name="Paes Leme A.F."/>
            <person name="Portugal R.V."/>
            <person name="Ambrosio A.L."/>
            <person name="Dias S.M."/>
        </authorList>
    </citation>
    <scope>SUBUNIT</scope>
</reference>
<sequence>MRSMRALQNALSRAGSHGRRGGWGHPSRGPLLGRGVRYYLGEAAAQGRGTPHSHQPQHSDHDASHSGMLPRLGDLLFYTIAEGQERIPIHKFTTALKATGLQTSDPRLQDCMSKMQRMVQESSSGGLLDRELFQKCVSSNIVLLTQAFRKKFVIPDFEEFTGHVDRIFEDAKEPTGGKVAAYIPHLAKSNPDLWGVSLCTVDGQRHSVGHTKIPFCLQSCVKPLTYAISVSTLGTDYVHKFVGKEPSGLRYNKLSLNEEGIPHNPMVNAGAIVVSSLIKMDCNKAEKFDFVLQYLNKMAGNEFMGFSNATFQSEKETGDRNYAIGYYLKEKKCFPKGVDMMAALDLYFQLCSVEVTCESGSVMAATLANGGICPITGESVLSAEAVRNTLSLMHSCGMYDFSGQFAFHVGLPAKSAVSGAILLVVPNVMGMMCLSPPLDKLGNSQRGINFCQKLVSLFNFHNYDNLRHCARKLDPRREGGEVRNKTVVNLLFAAYSGDVSALRRFALSAMDMEQKDYDSRTALHVAAAEGHIEVVKFLIEACKVNPFVKDRWGNIPLDDAVQFNHLEVVKLLQDYHDSYLLSETQAEAAAETLSKENLESMV</sequence>
<gene>
    <name type="primary">Gls2</name>
    <name type="synonym">Kiaa4146</name>
</gene>
<protein>
    <recommendedName>
        <fullName>Glutaminase liver isoform, mitochondrial</fullName>
        <shortName>GLS</shortName>
        <ecNumber evidence="5">3.5.1.2</ecNumber>
    </recommendedName>
    <alternativeName>
        <fullName>L-glutaminase</fullName>
    </alternativeName>
    <alternativeName>
        <fullName>L-glutamine amidohydrolase</fullName>
        <shortName evidence="7">LGA</shortName>
    </alternativeName>
</protein>
<keyword id="KW-0007">Acetylation</keyword>
<keyword id="KW-0040">ANK repeat</keyword>
<keyword id="KW-0378">Hydrolase</keyword>
<keyword id="KW-0496">Mitochondrion</keyword>
<keyword id="KW-1185">Reference proteome</keyword>
<keyword id="KW-0677">Repeat</keyword>
<keyword id="KW-0809">Transit peptide</keyword>
<dbReference type="EC" id="3.5.1.2" evidence="5"/>
<dbReference type="EMBL" id="AK220231">
    <property type="protein sequence ID" value="BAD90156.1"/>
    <property type="status" value="ALT_INIT"/>
    <property type="molecule type" value="mRNA"/>
</dbReference>
<dbReference type="EMBL" id="AK165896">
    <property type="protein sequence ID" value="BAE38445.1"/>
    <property type="molecule type" value="mRNA"/>
</dbReference>
<dbReference type="EMBL" id="BC141115">
    <property type="protein sequence ID" value="AAI41116.1"/>
    <property type="molecule type" value="mRNA"/>
</dbReference>
<dbReference type="CCDS" id="CCDS24263.1"/>
<dbReference type="RefSeq" id="NP_001028436.2">
    <property type="nucleotide sequence ID" value="NM_001033264.3"/>
</dbReference>
<dbReference type="SMR" id="Q571F8"/>
<dbReference type="BioGRID" id="229751">
    <property type="interactions" value="1"/>
</dbReference>
<dbReference type="FunCoup" id="Q571F8">
    <property type="interactions" value="451"/>
</dbReference>
<dbReference type="STRING" id="10090.ENSMUSP00000047376"/>
<dbReference type="BindingDB" id="Q571F8"/>
<dbReference type="ChEMBL" id="CHEMBL2176860"/>
<dbReference type="GlyGen" id="Q571F8">
    <property type="glycosylation" value="1 site, 1 O-linked glycan (1 site)"/>
</dbReference>
<dbReference type="iPTMnet" id="Q571F8"/>
<dbReference type="PhosphoSitePlus" id="Q571F8"/>
<dbReference type="SwissPalm" id="Q571F8"/>
<dbReference type="jPOST" id="Q571F8"/>
<dbReference type="PaxDb" id="10090-ENSMUSP00000047376"/>
<dbReference type="PeptideAtlas" id="Q571F8"/>
<dbReference type="ProteomicsDB" id="271397"/>
<dbReference type="Pumba" id="Q571F8"/>
<dbReference type="Antibodypedia" id="28236">
    <property type="antibodies" value="307 antibodies from 31 providers"/>
</dbReference>
<dbReference type="DNASU" id="216456"/>
<dbReference type="Ensembl" id="ENSMUST00000044776.13">
    <property type="protein sequence ID" value="ENSMUSP00000047376.7"/>
    <property type="gene ID" value="ENSMUSG00000044005.14"/>
</dbReference>
<dbReference type="GeneID" id="216456"/>
<dbReference type="KEGG" id="mmu:216456"/>
<dbReference type="UCSC" id="uc007hlo.2">
    <property type="organism name" value="mouse"/>
</dbReference>
<dbReference type="AGR" id="MGI:2143539"/>
<dbReference type="CTD" id="27165"/>
<dbReference type="MGI" id="MGI:2143539">
    <property type="gene designation" value="Gls2"/>
</dbReference>
<dbReference type="VEuPathDB" id="HostDB:ENSMUSG00000044005"/>
<dbReference type="eggNOG" id="KOG0506">
    <property type="taxonomic scope" value="Eukaryota"/>
</dbReference>
<dbReference type="GeneTree" id="ENSGT00390000010463"/>
<dbReference type="HOGENOM" id="CLU_016439_1_0_1"/>
<dbReference type="InParanoid" id="Q571F8"/>
<dbReference type="OMA" id="KENNCFP"/>
<dbReference type="OrthoDB" id="9995210at2759"/>
<dbReference type="PhylomeDB" id="Q571F8"/>
<dbReference type="TreeFam" id="TF313359"/>
<dbReference type="Reactome" id="R-MMU-210500">
    <property type="pathway name" value="Glutamate Neurotransmitter Release Cycle"/>
</dbReference>
<dbReference type="Reactome" id="R-MMU-5628897">
    <property type="pathway name" value="TP53 Regulates Metabolic Genes"/>
</dbReference>
<dbReference type="Reactome" id="R-MMU-8964539">
    <property type="pathway name" value="Glutamate and glutamine metabolism"/>
</dbReference>
<dbReference type="BioGRID-ORCS" id="216456">
    <property type="hits" value="4 hits in 81 CRISPR screens"/>
</dbReference>
<dbReference type="ChiTaRS" id="Gls2">
    <property type="organism name" value="mouse"/>
</dbReference>
<dbReference type="PRO" id="PR:Q571F8"/>
<dbReference type="Proteomes" id="UP000000589">
    <property type="component" value="Chromosome 10"/>
</dbReference>
<dbReference type="RNAct" id="Q571F8">
    <property type="molecule type" value="protein"/>
</dbReference>
<dbReference type="Bgee" id="ENSMUSG00000044005">
    <property type="expression patterns" value="Expressed in left lobe of liver and 127 other cell types or tissues"/>
</dbReference>
<dbReference type="ExpressionAtlas" id="Q571F8">
    <property type="expression patterns" value="baseline and differential"/>
</dbReference>
<dbReference type="GO" id="GO:0005739">
    <property type="term" value="C:mitochondrion"/>
    <property type="evidence" value="ECO:0007005"/>
    <property type="project" value="MGI"/>
</dbReference>
<dbReference type="GO" id="GO:0004359">
    <property type="term" value="F:glutaminase activity"/>
    <property type="evidence" value="ECO:0007669"/>
    <property type="project" value="UniProtKB-EC"/>
</dbReference>
<dbReference type="GO" id="GO:0006541">
    <property type="term" value="P:glutamine metabolic process"/>
    <property type="evidence" value="ECO:0007669"/>
    <property type="project" value="InterPro"/>
</dbReference>
<dbReference type="GO" id="GO:0072593">
    <property type="term" value="P:reactive oxygen species metabolic process"/>
    <property type="evidence" value="ECO:0000266"/>
    <property type="project" value="MGI"/>
</dbReference>
<dbReference type="GO" id="GO:0042981">
    <property type="term" value="P:regulation of apoptotic process"/>
    <property type="evidence" value="ECO:0000266"/>
    <property type="project" value="MGI"/>
</dbReference>
<dbReference type="FunFam" id="1.10.238.210:FF:000001">
    <property type="entry name" value="Glutaminase kidney isoform, mitochondrial"/>
    <property type="match status" value="1"/>
</dbReference>
<dbReference type="FunFam" id="3.40.710.10:FF:000002">
    <property type="entry name" value="glutaminase kidney isoform, mitochondrial"/>
    <property type="match status" value="1"/>
</dbReference>
<dbReference type="FunFam" id="1.25.40.20:FF:000019">
    <property type="entry name" value="Glutaminase liver isoform, mitochondrial"/>
    <property type="match status" value="1"/>
</dbReference>
<dbReference type="Gene3D" id="1.10.238.210">
    <property type="match status" value="1"/>
</dbReference>
<dbReference type="Gene3D" id="1.25.40.20">
    <property type="entry name" value="Ankyrin repeat-containing domain"/>
    <property type="match status" value="1"/>
</dbReference>
<dbReference type="Gene3D" id="3.40.710.10">
    <property type="entry name" value="DD-peptidase/beta-lactamase superfamily"/>
    <property type="match status" value="1"/>
</dbReference>
<dbReference type="HAMAP" id="MF_00313">
    <property type="entry name" value="Glutaminase"/>
    <property type="match status" value="1"/>
</dbReference>
<dbReference type="InterPro" id="IPR002110">
    <property type="entry name" value="Ankyrin_rpt"/>
</dbReference>
<dbReference type="InterPro" id="IPR036770">
    <property type="entry name" value="Ankyrin_rpt-contain_sf"/>
</dbReference>
<dbReference type="InterPro" id="IPR012338">
    <property type="entry name" value="Beta-lactam/transpept-like"/>
</dbReference>
<dbReference type="InterPro" id="IPR015868">
    <property type="entry name" value="Glutaminase"/>
</dbReference>
<dbReference type="InterPro" id="IPR041541">
    <property type="entry name" value="Glutaminase_EF-hand"/>
</dbReference>
<dbReference type="NCBIfam" id="TIGR03814">
    <property type="entry name" value="Gln_ase"/>
    <property type="match status" value="1"/>
</dbReference>
<dbReference type="PANTHER" id="PTHR12544">
    <property type="entry name" value="GLUTAMINASE"/>
    <property type="match status" value="1"/>
</dbReference>
<dbReference type="PANTHER" id="PTHR12544:SF33">
    <property type="entry name" value="GLUTAMINASE LIVER ISOFORM, MITOCHONDRIAL"/>
    <property type="match status" value="1"/>
</dbReference>
<dbReference type="Pfam" id="PF12796">
    <property type="entry name" value="Ank_2"/>
    <property type="match status" value="1"/>
</dbReference>
<dbReference type="Pfam" id="PF17959">
    <property type="entry name" value="EF-hand_14"/>
    <property type="match status" value="1"/>
</dbReference>
<dbReference type="Pfam" id="PF04960">
    <property type="entry name" value="Glutaminase"/>
    <property type="match status" value="1"/>
</dbReference>
<dbReference type="SMART" id="SM00248">
    <property type="entry name" value="ANK"/>
    <property type="match status" value="2"/>
</dbReference>
<dbReference type="SUPFAM" id="SSF48403">
    <property type="entry name" value="Ankyrin repeat"/>
    <property type="match status" value="1"/>
</dbReference>
<dbReference type="SUPFAM" id="SSF56601">
    <property type="entry name" value="beta-lactamase/transpeptidase-like"/>
    <property type="match status" value="1"/>
</dbReference>
<dbReference type="PROSITE" id="PS50297">
    <property type="entry name" value="ANK_REP_REGION"/>
    <property type="match status" value="1"/>
</dbReference>
<dbReference type="PROSITE" id="PS50088">
    <property type="entry name" value="ANK_REPEAT"/>
    <property type="match status" value="1"/>
</dbReference>